<evidence type="ECO:0000250" key="1"/>
<evidence type="ECO:0000250" key="2">
    <source>
        <dbReference type="UniProtKB" id="P04517"/>
    </source>
</evidence>
<evidence type="ECO:0000250" key="3">
    <source>
        <dbReference type="UniProtKB" id="P09814"/>
    </source>
</evidence>
<evidence type="ECO:0000250" key="4">
    <source>
        <dbReference type="UniProtKB" id="P13529"/>
    </source>
</evidence>
<evidence type="ECO:0000250" key="5">
    <source>
        <dbReference type="UniProtKB" id="P17767"/>
    </source>
</evidence>
<evidence type="ECO:0000250" key="6">
    <source>
        <dbReference type="UniProtKB" id="P18247"/>
    </source>
</evidence>
<evidence type="ECO:0000250" key="7">
    <source>
        <dbReference type="UniProtKB" id="P21231"/>
    </source>
</evidence>
<evidence type="ECO:0000250" key="8">
    <source>
        <dbReference type="UniProtKB" id="P89509"/>
    </source>
</evidence>
<evidence type="ECO:0000255" key="9"/>
<evidence type="ECO:0000255" key="10">
    <source>
        <dbReference type="PROSITE-ProRule" id="PRU00539"/>
    </source>
</evidence>
<evidence type="ECO:0000255" key="11">
    <source>
        <dbReference type="PROSITE-ProRule" id="PRU00541"/>
    </source>
</evidence>
<evidence type="ECO:0000255" key="12">
    <source>
        <dbReference type="PROSITE-ProRule" id="PRU00542"/>
    </source>
</evidence>
<evidence type="ECO:0000255" key="13">
    <source>
        <dbReference type="PROSITE-ProRule" id="PRU00766"/>
    </source>
</evidence>
<evidence type="ECO:0000255" key="14">
    <source>
        <dbReference type="PROSITE-ProRule" id="PRU01080"/>
    </source>
</evidence>
<evidence type="ECO:0000255" key="15">
    <source>
        <dbReference type="PROSITE-ProRule" id="PRU01219"/>
    </source>
</evidence>
<evidence type="ECO:0000256" key="16">
    <source>
        <dbReference type="SAM" id="MobiDB-lite"/>
    </source>
</evidence>
<evidence type="ECO:0000305" key="17"/>
<accession>P31999</accession>
<accession>P90263</accession>
<organism>
    <name type="scientific">Lettuce mosaic virus (strain 0 / isolate French)</name>
    <name type="common">LMV</name>
    <dbReference type="NCBI Taxonomy" id="117132"/>
    <lineage>
        <taxon>Viruses</taxon>
        <taxon>Riboviria</taxon>
        <taxon>Orthornavirae</taxon>
        <taxon>Pisuviricota</taxon>
        <taxon>Stelpaviricetes</taxon>
        <taxon>Patatavirales</taxon>
        <taxon>Potyviridae</taxon>
        <taxon>Potyvirus</taxon>
        <taxon>Potyvirus lactucae</taxon>
        <taxon>Lettuce mosaic virus</taxon>
    </lineage>
</organism>
<proteinExistence type="evidence at transcript level"/>
<feature type="chain" id="PRO_0000419999" description="Genome polyprotein">
    <location>
        <begin position="1"/>
        <end position="3255"/>
    </location>
</feature>
<feature type="chain" id="PRO_0000040269" description="P1 protease" evidence="9">
    <location>
        <begin position="1"/>
        <end position="437"/>
    </location>
</feature>
<feature type="chain" id="PRO_0000040270" description="Helper component proteinase" evidence="9">
    <location>
        <begin position="438"/>
        <end position="895"/>
    </location>
</feature>
<feature type="chain" id="PRO_0000040271" description="Protein P3" evidence="1">
    <location>
        <begin position="896"/>
        <end position="1273"/>
    </location>
</feature>
<feature type="chain" id="PRO_0000040272" description="6 kDa protein 1" evidence="1">
    <location>
        <begin position="1274"/>
        <end position="1325"/>
    </location>
</feature>
<feature type="chain" id="PRO_0000040273" description="Cytoplasmic inclusion protein" evidence="1">
    <location>
        <begin position="1326"/>
        <end position="1968"/>
    </location>
</feature>
<feature type="chain" id="PRO_0000040274" description="6 kDa protein 2" evidence="1">
    <location>
        <begin position="1969"/>
        <end position="2021"/>
    </location>
</feature>
<feature type="chain" id="PRO_0000040275" description="Viral genome-linked protein" evidence="1">
    <location>
        <begin position="2022"/>
        <end position="2214"/>
    </location>
</feature>
<feature type="chain" id="PRO_0000040276" description="Nuclear inclusion protein A" evidence="1">
    <location>
        <begin position="2215"/>
        <end position="2457"/>
    </location>
</feature>
<feature type="chain" id="PRO_0000040277" description="Nuclear inclusion protein B" evidence="1">
    <location>
        <begin position="2458"/>
        <end position="2977"/>
    </location>
</feature>
<feature type="chain" id="PRO_0000040278" description="Capsid protein" evidence="1">
    <location>
        <begin position="2978"/>
        <end position="3255"/>
    </location>
</feature>
<feature type="domain" description="Peptidase S30" evidence="15">
    <location>
        <begin position="292"/>
        <end position="437"/>
    </location>
</feature>
<feature type="domain" description="Peptidase C6" evidence="14">
    <location>
        <begin position="773"/>
        <end position="895"/>
    </location>
</feature>
<feature type="domain" description="Helicase ATP-binding" evidence="11">
    <location>
        <begin position="1397"/>
        <end position="1549"/>
    </location>
</feature>
<feature type="domain" description="Helicase C-terminal" evidence="12">
    <location>
        <begin position="1568"/>
        <end position="1727"/>
    </location>
</feature>
<feature type="domain" description="Peptidase C4" evidence="13">
    <location>
        <begin position="2215"/>
        <end position="2433"/>
    </location>
</feature>
<feature type="domain" description="RdRp catalytic" evidence="10">
    <location>
        <begin position="2699"/>
        <end position="2823"/>
    </location>
</feature>
<feature type="region of interest" description="Disordered" evidence="16">
    <location>
        <begin position="2980"/>
        <end position="3028"/>
    </location>
</feature>
<feature type="short sequence motif" description="Involved in interaction with stylet and aphid transmission" evidence="1">
    <location>
        <begin position="489"/>
        <end position="492"/>
    </location>
</feature>
<feature type="short sequence motif" description="Involved in virions binding and aphid transmission" evidence="1">
    <location>
        <begin position="747"/>
        <end position="749"/>
    </location>
</feature>
<feature type="short sequence motif" description="DECH box">
    <location>
        <begin position="1499"/>
        <end position="1502"/>
    </location>
</feature>
<feature type="short sequence motif" description="Nuclear localization signal" evidence="9">
    <location>
        <begin position="2062"/>
        <end position="2069"/>
    </location>
</feature>
<feature type="compositionally biased region" description="Basic and acidic residues" evidence="16">
    <location>
        <begin position="2989"/>
        <end position="3005"/>
    </location>
</feature>
<feature type="active site" description="For P1 proteinase activity" evidence="15">
    <location>
        <position position="345"/>
    </location>
</feature>
<feature type="active site" description="For P1 proteinase activity" evidence="15">
    <location>
        <position position="354"/>
    </location>
</feature>
<feature type="active site" description="For P1 proteinase activity" evidence="15">
    <location>
        <position position="388"/>
    </location>
</feature>
<feature type="active site" description="For helper component proteinase activity" evidence="14">
    <location>
        <position position="781"/>
    </location>
</feature>
<feature type="active site" description="For helper component proteinase activity" evidence="14">
    <location>
        <position position="854"/>
    </location>
</feature>
<feature type="active site" description="For nuclear inclusion protein A activity" evidence="13">
    <location>
        <position position="2260"/>
    </location>
</feature>
<feature type="active site" description="For nuclear inclusion protein A activity" evidence="13">
    <location>
        <position position="2295"/>
    </location>
</feature>
<feature type="active site" description="For nuclear inclusion protein A activity" evidence="13">
    <location>
        <position position="2365"/>
    </location>
</feature>
<feature type="binding site" evidence="11">
    <location>
        <begin position="1410"/>
        <end position="1417"/>
    </location>
    <ligand>
        <name>ATP</name>
        <dbReference type="ChEBI" id="CHEBI:30616"/>
    </ligand>
</feature>
<feature type="site" description="Cleavage; by P1 proteinase" evidence="15">
    <location>
        <begin position="437"/>
        <end position="438"/>
    </location>
</feature>
<feature type="site" description="Cleavage; by autolysis" evidence="14">
    <location>
        <begin position="895"/>
        <end position="896"/>
    </location>
</feature>
<feature type="site" description="Cleavage; by NIa-pro" evidence="6">
    <location>
        <begin position="1273"/>
        <end position="1274"/>
    </location>
</feature>
<feature type="site" description="Cleavage; by NIa-pro" evidence="6">
    <location>
        <begin position="1325"/>
        <end position="1326"/>
    </location>
</feature>
<feature type="site" description="Cleavage; by NIa-pro" evidence="6">
    <location>
        <begin position="1968"/>
        <end position="1969"/>
    </location>
</feature>
<feature type="site" description="Cleavage; by NIa-pro" evidence="6">
    <location>
        <begin position="2021"/>
        <end position="2022"/>
    </location>
</feature>
<feature type="site" description="Cleavage; by NIa-pro" evidence="6">
    <location>
        <begin position="2214"/>
        <end position="2215"/>
    </location>
</feature>
<feature type="site" description="Cleavage; by NIa-pro" evidence="6">
    <location>
        <begin position="2457"/>
        <end position="2458"/>
    </location>
</feature>
<feature type="site" description="Cleavage; by NIa-pro" evidence="6">
    <location>
        <begin position="2977"/>
        <end position="2978"/>
    </location>
</feature>
<feature type="modified residue" description="O-(5'-phospho-RNA)-tyrosine" evidence="3">
    <location>
        <position position="2084"/>
    </location>
</feature>
<feature type="modified residue" description="Phosphothreonine" evidence="5">
    <location>
        <position position="3237"/>
    </location>
</feature>
<reference key="1">
    <citation type="journal article" date="1997" name="Virus Res.">
        <title>Comparison of the complete nucleotide sequences of two isolates of lettuce mosaic virus differing in their biological properties.</title>
        <authorList>
            <person name="Revers F."/>
            <person name="Yang S.J."/>
            <person name="Walter J."/>
            <person name="Souche S."/>
            <person name="Lot H."/>
            <person name="Le Gall O."/>
            <person name="Candresse T."/>
            <person name="Dunez J."/>
        </authorList>
    </citation>
    <scope>NUCLEOTIDE SEQUENCE [MRNA]</scope>
</reference>
<reference key="2">
    <citation type="submission" date="2000-08" db="EMBL/GenBank/DDBJ databases">
        <authorList>
            <person name="Le Gall O."/>
        </authorList>
    </citation>
    <scope>SEQUENCE REVISION TO 1750 AND 1771</scope>
</reference>
<reference key="3">
    <citation type="journal article" date="1991" name="Arch. Virol.">
        <title>Nucleotide sequence of the 3' terminal region of lettuce mosaic potyvirus RNA shows a Gln/Val dipeptide at the cleavage site between the polymerase and the Capsid protein.</title>
        <authorList>
            <person name="Dinant S."/>
            <person name="Lot H."/>
            <person name="Albouy J."/>
            <person name="Kuziak C."/>
            <person name="Meyer M."/>
            <person name="Astier-Manifacier S."/>
        </authorList>
    </citation>
    <scope>NUCLEOTIDE SEQUENCE [GENOMIC RNA] OF 2776-3255</scope>
</reference>
<reference key="4">
    <citation type="journal article" date="2001" name="Virus Res.">
        <title>Potyvirus proteins: a wealth of functions.</title>
        <authorList>
            <person name="Urcuqui-Inchima S."/>
            <person name="Haenni A.L."/>
            <person name="Bernardi F."/>
        </authorList>
    </citation>
    <scope>REVIEW</scope>
</reference>
<name>POLG_LMV0</name>
<protein>
    <recommendedName>
        <fullName>Genome polyprotein</fullName>
    </recommendedName>
    <component>
        <recommendedName>
            <fullName>P1 protease</fullName>
            <ecNumber>3.4.21.-</ecNumber>
        </recommendedName>
        <alternativeName>
            <fullName>Leader protease P1</fullName>
        </alternativeName>
        <alternativeName>
            <fullName>N-terminal protein</fullName>
        </alternativeName>
        <alternativeName>
            <fullName>P1 proteinase</fullName>
        </alternativeName>
    </component>
    <component>
        <recommendedName>
            <fullName>Helper component proteinase</fullName>
            <shortName>HC-pro</shortName>
            <ecNumber evidence="2">3.4.22.45</ecNumber>
        </recommendedName>
    </component>
    <component>
        <recommendedName>
            <fullName>Protein P3</fullName>
        </recommendedName>
    </component>
    <component>
        <recommendedName>
            <fullName>6 kDa protein 1</fullName>
            <shortName>6K1</shortName>
        </recommendedName>
    </component>
    <component>
        <recommendedName>
            <fullName>Cytoplasmic inclusion protein</fullName>
            <shortName>CI</shortName>
            <ecNumber>3.6.4.-</ecNumber>
        </recommendedName>
    </component>
    <component>
        <recommendedName>
            <fullName>6 kDa protein 2</fullName>
            <shortName>6K2</shortName>
        </recommendedName>
    </component>
    <component>
        <recommendedName>
            <fullName>Viral genome-linked protein</fullName>
        </recommendedName>
        <alternativeName>
            <fullName>VPg</fullName>
        </alternativeName>
    </component>
    <component>
        <recommendedName>
            <fullName>Nuclear inclusion protein A</fullName>
            <shortName>NI-a</shortName>
            <shortName>NIa</shortName>
            <ecNumber>3.4.22.44</ecNumber>
        </recommendedName>
        <alternativeName>
            <fullName>49 kDa proteinase</fullName>
            <shortName>49 kDa-Pro</shortName>
        </alternativeName>
        <alternativeName>
            <fullName>NIa-pro</fullName>
        </alternativeName>
    </component>
    <component>
        <recommendedName>
            <fullName>Nuclear inclusion protein B</fullName>
            <shortName>NI-b</shortName>
            <shortName>NIb</shortName>
            <ecNumber>2.7.7.48</ecNumber>
        </recommendedName>
        <alternativeName>
            <fullName>RNA-directed RNA polymerase</fullName>
        </alternativeName>
    </component>
    <component>
        <recommendedName>
            <fullName>Capsid protein</fullName>
            <shortName>CP</shortName>
        </recommendedName>
        <alternativeName>
            <fullName>Coat protein</fullName>
        </alternativeName>
    </component>
</protein>
<comment type="function">
    <molecule>Helper component proteinase</molecule>
    <text evidence="2">Required for aphid transmission and also has proteolytic activity. Only cleaves a Gly-Gly dipeptide at its own C-terminus. Interacts with virions and aphid stylets. Acts as a suppressor of RNA-mediated gene silencing, also known as post-transcriptional gene silencing (PTGS), a mechanism of plant viral defense that limits the accumulation of viral RNAs. May have RNA-binding activity.</text>
</comment>
<comment type="function">
    <molecule>Cytoplasmic inclusion protein</molecule>
    <text>Has helicase activity. It may be involved in replication.</text>
</comment>
<comment type="function">
    <molecule>6 kDa protein 1</molecule>
    <text evidence="4 8">Indispensable for virus replication (By similarity). Reduces the abundance of host transcripts related to jasmonic acid biosynthesis therefore altering the host defenses (By similarity). In order to increase its own stability, decreases host protein degradation pathways (By similarity).</text>
</comment>
<comment type="function">
    <molecule>6 kDa protein 2</molecule>
    <text evidence="3">Indispensable for virus replication.</text>
</comment>
<comment type="function">
    <molecule>Viral genome-linked protein</molecule>
    <text evidence="6">Mediates the cap-independent, EIF4E-dependent translation of viral genomic RNAs (By similarity). Binds to the cap-binding site of host EIF4E and thus interferes with the host EIF4E-dependent mRNA export and translation (By similarity). VPg-RNA directly binds EIF4E and is a template for transcription (By similarity). Also forms trimeric complexes with EIF4E-EIF4G, which are templates for translation (By similarity).</text>
</comment>
<comment type="function">
    <molecule>Nuclear inclusion protein A</molecule>
    <text evidence="2">Has RNA-binding and proteolytic activities.</text>
</comment>
<comment type="function">
    <molecule>Nuclear inclusion protein B</molecule>
    <text>An RNA-dependent RNA polymerase that plays an essential role in the virus replication.</text>
</comment>
<comment type="function">
    <molecule>Capsid protein</molecule>
    <text evidence="2">Involved in aphid transmission, cell-to-cell and systemis movement, encapsidation of the viral RNA and in the regulation of viral RNA amplification.</text>
</comment>
<comment type="catalytic activity">
    <molecule>Nuclear inclusion protein B</molecule>
    <reaction evidence="10">
        <text>RNA(n) + a ribonucleoside 5'-triphosphate = RNA(n+1) + diphosphate</text>
        <dbReference type="Rhea" id="RHEA:21248"/>
        <dbReference type="Rhea" id="RHEA-COMP:14527"/>
        <dbReference type="Rhea" id="RHEA-COMP:17342"/>
        <dbReference type="ChEBI" id="CHEBI:33019"/>
        <dbReference type="ChEBI" id="CHEBI:61557"/>
        <dbReference type="ChEBI" id="CHEBI:140395"/>
        <dbReference type="EC" id="2.7.7.48"/>
    </reaction>
</comment>
<comment type="catalytic activity">
    <molecule>Nuclear inclusion protein A</molecule>
    <reaction evidence="2">
        <text>Hydrolyzes glutaminyl bonds, and activity is further restricted by preferences for the amino acids in P6 - P1' that vary with the species of potyvirus, e.g. Glu-Xaa-Xaa-Tyr-Xaa-Gln-|-(Ser or Gly) for the enzyme from tobacco etch virus. The natural substrate is the viral polyprotein, but other proteins and oligopeptides containing the appropriate consensus sequence are also cleaved.</text>
        <dbReference type="EC" id="3.4.22.44"/>
    </reaction>
</comment>
<comment type="catalytic activity">
    <molecule>Helper component proteinase</molecule>
    <reaction evidence="2">
        <text>Hydrolyzes a Gly-|-Gly bond at its own C-terminus, commonly in the sequence -Tyr-Xaa-Val-Gly-|-Gly, in the processing of the potyviral polyprotein.</text>
        <dbReference type="EC" id="3.4.22.45"/>
    </reaction>
</comment>
<comment type="subunit">
    <molecule>Viral genome-linked protein</molecule>
    <text evidence="6">Interacts with host eIF4E protein (via cap-binding region); this interaction mediates the translation of the VPg-viral RNA conjugates (By similarity). Part of a complex that comprises VPg, RNA, host EIF4E and EIF4G; this interaction mediates the translation of the VPg-viral RNA conjugates (By similarity).</text>
</comment>
<comment type="subcellular location">
    <molecule>6 kDa protein 1</molecule>
    <subcellularLocation>
        <location>Host cytoplasmic vesicle</location>
    </subcellularLocation>
    <text evidence="4">Probably colocalizes with 6K2-induced vesicles associated with host chloroplasts.</text>
</comment>
<comment type="subcellular location">
    <molecule>6 kDa protein 2</molecule>
    <subcellularLocation>
        <location evidence="3">Host cytoplasmic vesicle</location>
    </subcellularLocation>
    <text evidence="3">6K-induced vesicles associate with host chloroplasts.</text>
</comment>
<comment type="subcellular location">
    <molecule>Viral genome-linked protein</molecule>
    <subcellularLocation>
        <location evidence="7">Host nucleus</location>
    </subcellularLocation>
    <text evidence="7">Binds to host plant eIF4E proteins in the host nucleus.</text>
</comment>
<comment type="subcellular location">
    <molecule>Capsid protein</molecule>
    <subcellularLocation>
        <location evidence="17">Virion</location>
    </subcellularLocation>
</comment>
<comment type="alternative products">
    <event type="ribosomal frameshifting"/>
    <isoform>
        <id>P31999-1</id>
        <name>Genome polyprotein</name>
        <sequence type="displayed"/>
    </isoform>
    <isoform>
        <id>P0CJ97-1</id>
        <name>P3N-PIPO polyprotein</name>
        <sequence type="external"/>
    </isoform>
</comment>
<comment type="domain">
    <molecule>Helper component proteinase</molecule>
    <text>The N-terminus is involved in interaction with stylets. The central part is involved in interaction with virions and the C-terminus is involved in cell-to cell movement of the virus.</text>
</comment>
<comment type="PTM">
    <molecule>Viral genome-linked protein</molecule>
    <text evidence="3">VPg is uridylylated by the polymerase and is covalently attached to the 5'-end of the genomic RNA. This uridylylated form acts as a nucleotide-peptide primer for the polymerase (By similarity).</text>
</comment>
<comment type="PTM">
    <molecule>Genome polyprotein</molecule>
    <text evidence="1">Potyviral RNA is expressed as two polyproteins which undergo post-translational proteolytic processing. Genome polyprotein is processed by NIa-pro, P1 and HC-pro proteinases resulting in the production of at least ten individual proteins. P3N-PIPO polyprotein is cleaved by P1 and HC-pro proteinases resulting in the production of three individual proteins. The P1 proteinase and the HC-pro cleave only their respective C-termini autocatalytically. 6K1 is essential for proper proteolytic separation of P3 from CI (By similarity).</text>
</comment>
<comment type="miscellaneous">
    <molecule>Isoform Genome polyprotein</molecule>
    <text>Produced by conventional translation.</text>
</comment>
<comment type="similarity">
    <text evidence="17">Belongs to the potyviridae genome polyprotein family.</text>
</comment>
<organismHost>
    <name type="scientific">Carthamus tinctorius</name>
    <name type="common">Safflower</name>
    <dbReference type="NCBI Taxonomy" id="4222"/>
</organismHost>
<organismHost>
    <name type="scientific">Cicer arietinum</name>
    <name type="common">Chickpea</name>
    <name type="synonym">Garbanzo</name>
    <dbReference type="NCBI Taxonomy" id="3827"/>
</organismHost>
<organismHost>
    <name type="scientific">Cichorium endivia</name>
    <name type="common">Endive</name>
    <dbReference type="NCBI Taxonomy" id="114280"/>
</organismHost>
<organismHost>
    <name type="scientific">Cichorium intybus</name>
    <name type="common">Chicory</name>
    <dbReference type="NCBI Taxonomy" id="13427"/>
</organismHost>
<organismHost>
    <name type="scientific">Eustoma exaltatum subsp. russellianum</name>
    <name type="common">Bluebells</name>
    <name type="synonym">Eustoma grandiflorum</name>
    <dbReference type="NCBI Taxonomy" id="52518"/>
</organismHost>
<organismHost>
    <name type="scientific">Lactuca</name>
    <dbReference type="NCBI Taxonomy" id="4235"/>
</organismHost>
<organismHost>
    <name type="scientific">Pisum sativum</name>
    <name type="common">Garden pea</name>
    <name type="synonym">Lathyrus oleraceus</name>
    <dbReference type="NCBI Taxonomy" id="3888"/>
</organismHost>
<organismHost>
    <name type="scientific">Spinacia oleracea</name>
    <name type="common">Spinach</name>
    <dbReference type="NCBI Taxonomy" id="3562"/>
</organismHost>
<dbReference type="EC" id="3.4.21.-"/>
<dbReference type="EC" id="3.4.22.45" evidence="2"/>
<dbReference type="EC" id="3.6.4.-"/>
<dbReference type="EC" id="3.4.22.44"/>
<dbReference type="EC" id="2.7.7.48"/>
<dbReference type="EMBL" id="X97704">
    <property type="protein sequence ID" value="CAA66280.2"/>
    <property type="molecule type" value="mRNA"/>
</dbReference>
<dbReference type="EMBL" id="X65652">
    <property type="protein sequence ID" value="CAA46602.1"/>
    <property type="molecule type" value="Genomic_RNA"/>
</dbReference>
<dbReference type="PIR" id="S70859">
    <property type="entry name" value="S70859"/>
</dbReference>
<dbReference type="Proteomes" id="UP000008377">
    <property type="component" value="Genome"/>
</dbReference>
<dbReference type="GO" id="GO:0019029">
    <property type="term" value="C:helical viral capsid"/>
    <property type="evidence" value="ECO:0007669"/>
    <property type="project" value="UniProtKB-KW"/>
</dbReference>
<dbReference type="GO" id="GO:0044161">
    <property type="term" value="C:host cell cytoplasmic vesicle"/>
    <property type="evidence" value="ECO:0007669"/>
    <property type="project" value="UniProtKB-SubCell"/>
</dbReference>
<dbReference type="GO" id="GO:0042025">
    <property type="term" value="C:host cell nucleus"/>
    <property type="evidence" value="ECO:0007669"/>
    <property type="project" value="UniProtKB-SubCell"/>
</dbReference>
<dbReference type="GO" id="GO:0005524">
    <property type="term" value="F:ATP binding"/>
    <property type="evidence" value="ECO:0007669"/>
    <property type="project" value="UniProtKB-KW"/>
</dbReference>
<dbReference type="GO" id="GO:0004197">
    <property type="term" value="F:cysteine-type endopeptidase activity"/>
    <property type="evidence" value="ECO:0007669"/>
    <property type="project" value="InterPro"/>
</dbReference>
<dbReference type="GO" id="GO:0004386">
    <property type="term" value="F:helicase activity"/>
    <property type="evidence" value="ECO:0007669"/>
    <property type="project" value="UniProtKB-KW"/>
</dbReference>
<dbReference type="GO" id="GO:0016818">
    <property type="term" value="F:hydrolase activity, acting on acid anhydrides, in phosphorus-containing anhydrides"/>
    <property type="evidence" value="ECO:0007669"/>
    <property type="project" value="InterPro"/>
</dbReference>
<dbReference type="GO" id="GO:0003723">
    <property type="term" value="F:RNA binding"/>
    <property type="evidence" value="ECO:0007669"/>
    <property type="project" value="InterPro"/>
</dbReference>
<dbReference type="GO" id="GO:0003968">
    <property type="term" value="F:RNA-directed RNA polymerase activity"/>
    <property type="evidence" value="ECO:0007669"/>
    <property type="project" value="UniProtKB-KW"/>
</dbReference>
<dbReference type="GO" id="GO:0008236">
    <property type="term" value="F:serine-type peptidase activity"/>
    <property type="evidence" value="ECO:0007669"/>
    <property type="project" value="UniProtKB-KW"/>
</dbReference>
<dbReference type="GO" id="GO:0005198">
    <property type="term" value="F:structural molecule activity"/>
    <property type="evidence" value="ECO:0007669"/>
    <property type="project" value="InterPro"/>
</dbReference>
<dbReference type="GO" id="GO:0006351">
    <property type="term" value="P:DNA-templated transcription"/>
    <property type="evidence" value="ECO:0007669"/>
    <property type="project" value="InterPro"/>
</dbReference>
<dbReference type="GO" id="GO:0006508">
    <property type="term" value="P:proteolysis"/>
    <property type="evidence" value="ECO:0007669"/>
    <property type="project" value="UniProtKB-KW"/>
</dbReference>
<dbReference type="GO" id="GO:0052170">
    <property type="term" value="P:symbiont-mediated suppression of host innate immune response"/>
    <property type="evidence" value="ECO:0007669"/>
    <property type="project" value="UniProtKB-KW"/>
</dbReference>
<dbReference type="GO" id="GO:0039694">
    <property type="term" value="P:viral RNA genome replication"/>
    <property type="evidence" value="ECO:0007669"/>
    <property type="project" value="InterPro"/>
</dbReference>
<dbReference type="GO" id="GO:0075523">
    <property type="term" value="P:viral translational frameshifting"/>
    <property type="evidence" value="ECO:0007669"/>
    <property type="project" value="UniProtKB-KW"/>
</dbReference>
<dbReference type="CDD" id="cd23175">
    <property type="entry name" value="ps-ssRNAv_Potyviridae_RdRp"/>
    <property type="match status" value="1"/>
</dbReference>
<dbReference type="Gene3D" id="3.30.70.270">
    <property type="match status" value="1"/>
</dbReference>
<dbReference type="Gene3D" id="3.90.70.150">
    <property type="entry name" value="Helper component proteinase"/>
    <property type="match status" value="1"/>
</dbReference>
<dbReference type="Gene3D" id="3.40.50.300">
    <property type="entry name" value="P-loop containing nucleotide triphosphate hydrolases"/>
    <property type="match status" value="2"/>
</dbReference>
<dbReference type="Gene3D" id="2.40.10.10">
    <property type="entry name" value="Trypsin-like serine proteases"/>
    <property type="match status" value="2"/>
</dbReference>
<dbReference type="InterPro" id="IPR011545">
    <property type="entry name" value="DEAD/DEAH_box_helicase_dom"/>
</dbReference>
<dbReference type="InterPro" id="IPR043502">
    <property type="entry name" value="DNA/RNA_pol_sf"/>
</dbReference>
<dbReference type="InterPro" id="IPR001456">
    <property type="entry name" value="HC-pro"/>
</dbReference>
<dbReference type="InterPro" id="IPR031159">
    <property type="entry name" value="HC_PRO_CPD_dom"/>
</dbReference>
<dbReference type="InterPro" id="IPR042308">
    <property type="entry name" value="HC_PRO_CPD_sf"/>
</dbReference>
<dbReference type="InterPro" id="IPR014001">
    <property type="entry name" value="Helicase_ATP-bd"/>
</dbReference>
<dbReference type="InterPro" id="IPR001650">
    <property type="entry name" value="Helicase_C-like"/>
</dbReference>
<dbReference type="InterPro" id="IPR027417">
    <property type="entry name" value="P-loop_NTPase"/>
</dbReference>
<dbReference type="InterPro" id="IPR002540">
    <property type="entry name" value="Pept_S30_P1_potyvir"/>
</dbReference>
<dbReference type="InterPro" id="IPR009003">
    <property type="entry name" value="Peptidase_S1_PA"/>
</dbReference>
<dbReference type="InterPro" id="IPR043504">
    <property type="entry name" value="Peptidase_S1_PA_chymotrypsin"/>
</dbReference>
<dbReference type="InterPro" id="IPR001592">
    <property type="entry name" value="Poty_coat"/>
</dbReference>
<dbReference type="InterPro" id="IPR001730">
    <property type="entry name" value="Potyv_NIa-pro_dom"/>
</dbReference>
<dbReference type="InterPro" id="IPR039560">
    <property type="entry name" value="Potyvirid-P3"/>
</dbReference>
<dbReference type="InterPro" id="IPR013648">
    <property type="entry name" value="PP_Potyviridae"/>
</dbReference>
<dbReference type="InterPro" id="IPR043128">
    <property type="entry name" value="Rev_trsase/Diguanyl_cyclase"/>
</dbReference>
<dbReference type="InterPro" id="IPR001205">
    <property type="entry name" value="RNA-dir_pol_C"/>
</dbReference>
<dbReference type="InterPro" id="IPR007094">
    <property type="entry name" value="RNA-dir_pol_PSvirus"/>
</dbReference>
<dbReference type="PANTHER" id="PTHR43519">
    <property type="entry name" value="ATP-DEPENDENT RNA HELICASE HRPB"/>
    <property type="match status" value="1"/>
</dbReference>
<dbReference type="PANTHER" id="PTHR43519:SF1">
    <property type="entry name" value="ATP-DEPENDENT RNA HELICASE HRPB"/>
    <property type="match status" value="1"/>
</dbReference>
<dbReference type="Pfam" id="PF00270">
    <property type="entry name" value="DEAD"/>
    <property type="match status" value="1"/>
</dbReference>
<dbReference type="Pfam" id="PF00271">
    <property type="entry name" value="Helicase_C"/>
    <property type="match status" value="1"/>
</dbReference>
<dbReference type="Pfam" id="PF00863">
    <property type="entry name" value="Peptidase_C4"/>
    <property type="match status" value="1"/>
</dbReference>
<dbReference type="Pfam" id="PF00851">
    <property type="entry name" value="Peptidase_C6"/>
    <property type="match status" value="1"/>
</dbReference>
<dbReference type="Pfam" id="PF01577">
    <property type="entry name" value="Peptidase_S30"/>
    <property type="match status" value="1"/>
</dbReference>
<dbReference type="Pfam" id="PF00767">
    <property type="entry name" value="Poty_coat"/>
    <property type="match status" value="1"/>
</dbReference>
<dbReference type="Pfam" id="PF08440">
    <property type="entry name" value="Poty_PP"/>
    <property type="match status" value="1"/>
</dbReference>
<dbReference type="Pfam" id="PF13608">
    <property type="entry name" value="Potyvirid-P3"/>
    <property type="match status" value="1"/>
</dbReference>
<dbReference type="Pfam" id="PF00680">
    <property type="entry name" value="RdRP_1"/>
    <property type="match status" value="1"/>
</dbReference>
<dbReference type="PRINTS" id="PR00966">
    <property type="entry name" value="NIAPOTYPTASE"/>
</dbReference>
<dbReference type="SMART" id="SM00487">
    <property type="entry name" value="DEXDc"/>
    <property type="match status" value="1"/>
</dbReference>
<dbReference type="SMART" id="SM00490">
    <property type="entry name" value="HELICc"/>
    <property type="match status" value="1"/>
</dbReference>
<dbReference type="SUPFAM" id="SSF56672">
    <property type="entry name" value="DNA/RNA polymerases"/>
    <property type="match status" value="1"/>
</dbReference>
<dbReference type="SUPFAM" id="SSF52540">
    <property type="entry name" value="P-loop containing nucleoside triphosphate hydrolases"/>
    <property type="match status" value="2"/>
</dbReference>
<dbReference type="SUPFAM" id="SSF50494">
    <property type="entry name" value="Trypsin-like serine proteases"/>
    <property type="match status" value="1"/>
</dbReference>
<dbReference type="PROSITE" id="PS51744">
    <property type="entry name" value="HC_PRO_CPD"/>
    <property type="match status" value="1"/>
</dbReference>
<dbReference type="PROSITE" id="PS51192">
    <property type="entry name" value="HELICASE_ATP_BIND_1"/>
    <property type="match status" value="1"/>
</dbReference>
<dbReference type="PROSITE" id="PS51194">
    <property type="entry name" value="HELICASE_CTER"/>
    <property type="match status" value="1"/>
</dbReference>
<dbReference type="PROSITE" id="PS51436">
    <property type="entry name" value="POTYVIRUS_NIA_PRO"/>
    <property type="match status" value="1"/>
</dbReference>
<dbReference type="PROSITE" id="PS51871">
    <property type="entry name" value="PV_P1_PRO"/>
    <property type="match status" value="1"/>
</dbReference>
<dbReference type="PROSITE" id="PS50507">
    <property type="entry name" value="RDRP_SSRNA_POS"/>
    <property type="match status" value="1"/>
</dbReference>
<keyword id="KW-0067">ATP-binding</keyword>
<keyword id="KW-0167">Capsid protein</keyword>
<keyword id="KW-0191">Covalent protein-RNA linkage</keyword>
<keyword id="KW-1139">Helical capsid protein</keyword>
<keyword id="KW-0347">Helicase</keyword>
<keyword id="KW-1036">Host cytoplasmic vesicle</keyword>
<keyword id="KW-1048">Host nucleus</keyword>
<keyword id="KW-0945">Host-virus interaction</keyword>
<keyword id="KW-0378">Hydrolase</keyword>
<keyword id="KW-1090">Inhibition of host innate immune response by virus</keyword>
<keyword id="KW-0547">Nucleotide-binding</keyword>
<keyword id="KW-0548">Nucleotidyltransferase</keyword>
<keyword id="KW-0597">Phosphoprotein</keyword>
<keyword id="KW-0645">Protease</keyword>
<keyword id="KW-0688">Ribosomal frameshifting</keyword>
<keyword id="KW-0696">RNA-directed RNA polymerase</keyword>
<keyword id="KW-0720">Serine protease</keyword>
<keyword id="KW-0941">Suppressor of RNA silencing</keyword>
<keyword id="KW-0788">Thiol protease</keyword>
<keyword id="KW-0808">Transferase</keyword>
<keyword id="KW-0899">Viral immunoevasion</keyword>
<keyword id="KW-0693">Viral RNA replication</keyword>
<keyword id="KW-0946">Virion</keyword>
<sequence length="3255" mass="367571">MATLDNCTQVHHMFAYNREHGTNYTRNHFRRYLAAQRIGFYYDWDDDVYECPTCEAIYHSLDDIKNWHECDPPAFDLNDFITDARLKSAPVPDLGPVIIEIPKAEEKQELNFFAATPAPEVSQWKCRGLQFGSFTELETSEPVASAPEPKCEEPARTIAKPEESVEQETRGDGKRLLQAQMEVDKAEQDLAFACLNASLKPRLEGRTTATIARRRDGCLVYKTKPSWSQRRRAKKTLKVDTLACENPYIPAIVDKISIAGGSSASVMHEQQKPKTLHTTPSRKVATHYKRTVMNQQTLMAFINQVGTILLNAEKEFEVVGCRKQKVTGKGTRHNGVRLVKLKTAHEEGHRRRVDIRIPNGLRPIVMRISARGGWHRTWTDSELSPGSSGYVLNSSKIIGKFGLRRHSIFVVRGRVDGEVIDSQSKVTHSITHRMVQYSDVARNFWNGYSTCFMHNTPKDILHTCTSDFDVKECGTVAALLTQTLFQFGKITCEKCAIEYKNLTRDELATRVNKEIDGTIISIQTQHPRFVHVLNFLRLIKQVLNAKNGNFGAFQETERIIGDRMDAPFSHVNKLNAIVIKGNQATSDEMAQASNHVLEIARYLKNRTENIQKGSLKSFRNKISGKAHLNPSLMCDNQLDKNGGFEWGQRSYHAKRFFDGYFETIDPSDGYSKYTIRRNPNGHRKLAIGNLIVSTNFESHRRSMIGESIEDPGLTNQCVSKEGDTFIYPCCCVTDEYGKPTLSEIKMPTKHHLVLGNAGDPKYVDLPKEAEGKMFVTKDGYCYINIFLAMLVDVPEDQAKDFTKMAREIAVKQLGEWPSMMDVATACNILATFHPDTRRSELPRILVDHATKTFHVIDSYGSITTGFHILKANTVTQLVKFAHESLESEMQHYRVGGEPDKAPRKPAGSVPTLGISDLRDLGVELENEEHSIRPNLQRLIKAIYRPRMMRSLLTEEPYLLILSIVSPGVLMALYNSGSLERTMHEFLQTDQRLSATAQILKHLAKKVSLAKTLTIQNAILEGGAGSLNEILDAPAGRSLSYRLAKQTVEVMMARSDMDKELVDVGFSVLRDQKNELIEKSYLMDLEDSWHALPLCGKLSAMRASRRWRDTSTPEVIPTGAADLKGRYSISVGSVSKSAILHLKGICSGAVKRVRDKWVGVQVQGVKWLAKSVHYMIPELTNILNVGTLLLTLISLGVAFRNLTGQFKEMKHKETLAKEEELRKRIRTYNSTYYEIHGKHADAKQITKFITHHDPKLLEVVEFYEGPEEEEVEHQAKREDQANLERIIAFTALVMMMFDSERSDCVYRSLSKLKSLVSTCEDDVRHQSVDEIIDLFDEKKETIDFEIEGKELYSSRVVDSTFSKWWDNQLVRGNTMAHYRTEGHFMTFTRETAASVAAEIAHNEYRDILLQGGVGSGKSTGLPFHLHRKGGVLLIEPTRPLAQNVYKQLGSSPFHLSPNLRMRGSCKFGSSQVTVATSGYALHFIANNAQSLKAYDFIIFDECHVLDASAMAFRCLLQEFEYQGKIIKVSATPPGRKLDFKPMHMVDIATENELSIQQFVQGQGTGVNCDATKKGDNILVYVSSYNEVDMLSKMLNDKGYKVTKVDGRTMKLGSVEVETVGTPQRKHFVVATNIIENGVTLDVDVVVDFGQKVVPILDSEHRMIRYTKKSITYGERIQRVGRVGRNKAGSAIRIGSTEMGTEEIPASIATEAAFLCFTYGLPVMTSNVSTSVLGNCTVRQARTMQKFELSPFFMVDLVHHDGTIHPAINSLLKQFKLKESDIKLSTLAIPNAVTTFWKSAREYNSLGARTTIDDAAKIPFMIKDVPEHLQEKLWETIQQYKGDAGFGRCTSANACKIAYTLSVSPFMIPATINKIDALMAEERQKMEYFQTVTANTCTISNFSISSIGDMIRSRYSTNHSRENLQKLQAVRDTIINFECQAGTGDGGSFDMETAQKLAEEYGCIDVIYHQSKEALSKRLGLKGRWNQSLICKDLLVFCGVAIGGTWMMFQSFKDGMADAVRHQGKGKRQRQKLRYRQARDNKVGIEVYGDDATMEHYFGAAYTEKGKKSGKTKGMGTKNRRFVNMYGYNPEDFSFIRFLDPLTGKTMDEQVFSDISLVQDAFSKERLKLLSEGEIESEHMRNGIRAYLVKNLTTAALEIDMTPHNSCQLGAKTNNIAGYVDREYELRQTGEARVVAPALIPKDNPITDEDIPVKHESKTLFRGLRDYNPIAAAICLLTNESDGMKETMYGIGFGNTIITNQHLFRRNNGVLRVQSRHGEYVLPNTTQLKVLPCEGRDIMVIILTPDFPPFPQKLKFRPPIKGEKICLVGSLFQDKSITSTVSETSVTTPVDNSFLWKHWITTKDGHCGLPLVSSNDGYIVGIHSATSSRQTQNYHAAMPEDFHQTHLIDPASKSWVKHWKYNPDNMVWGGINLINSTPREPFKINKLVTDLFGDAVQFQSKQDEWFASQLKGNLKAVGKSTSQLVTKHTVKGKCMMFELYLQTHEEEKEFFKPLMGAYQKSRLNREAFTKDIMKYSTPITVGIVDCDTFLKAEEGVIKRLERLGFSGCEYVTDEEAIFQALNMKAAVGALYSGKKRDYFEGYGPEEKENILRESCKRLYTGKFGVWNGSLKSELRPMEKVMANKTRVFTAAPLDTLLAGKVCVDDFNNYFYSKNIEAPWTVGMTKFYGGWNELLTKLPDGWVYCDADGSQFDSSLSPFLINSVLRIRLKFMEDWDLGEQMLKNLYTEIVYTAILTPDSTIVKKFKGNNSGQPSTVVDNTLMVVLAMTYTLHKLGFEDEEQDSMCKYFVNGDDLIIAIKPEHESLLDQFQHCFKSLGLNYDFNSRTRKKEELWFMSHCGIKKDGIFIPKLEPERIVSILEWDRSDQPVHRLEAICAAMIESWGYDKLTHEIRKFYKWCLEQAPYADLAKAGKAPYIAECALKRLYTSKEASEAELEKYMEAIRSLVNDEDDDDMDEVYHQVDAKLDAGQGSKTDDKQKNSADPKDNIITEKGSGSGQMKKDDDINAGLHGKHTIPRTKAITQKMKLPMIRGKVALNLDHLLEYEPNQRDISNTRATQKQYESWYDGVKNDYDVDDSGMQLILNGLMVWCIENGTSPNINGTWVMMDGEEQVEYALKPIIEHAKPTFRQIMAHFSDAAEAYIEMRNKKKPYMPRYGRLRGLNDMGLARYAFDFYETTSATPNRAREAHNQMKAAALVGTQNRLFGMDGGGSTQEENTERHTAADVNQNMHTLLGVRGLH</sequence>